<dbReference type="EC" id="7.5.2.12" evidence="1"/>
<dbReference type="EMBL" id="CP000305">
    <property type="protein sequence ID" value="ABG18054.1"/>
    <property type="molecule type" value="Genomic_DNA"/>
</dbReference>
<dbReference type="EMBL" id="ACNQ01000009">
    <property type="protein sequence ID" value="EEO77181.1"/>
    <property type="molecule type" value="Genomic_DNA"/>
</dbReference>
<dbReference type="RefSeq" id="WP_002210588.1">
    <property type="nucleotide sequence ID" value="NZ_ACNQ01000009.1"/>
</dbReference>
<dbReference type="SMR" id="Q1CIX6"/>
<dbReference type="GeneID" id="57976414"/>
<dbReference type="KEGG" id="ypn:YPN_1725"/>
<dbReference type="HOGENOM" id="CLU_000604_92_3_6"/>
<dbReference type="Proteomes" id="UP000008936">
    <property type="component" value="Chromosome"/>
</dbReference>
<dbReference type="GO" id="GO:0005886">
    <property type="term" value="C:plasma membrane"/>
    <property type="evidence" value="ECO:0007669"/>
    <property type="project" value="UniProtKB-SubCell"/>
</dbReference>
<dbReference type="GO" id="GO:0015612">
    <property type="term" value="F:ABC-type L-arabinose transporter activity"/>
    <property type="evidence" value="ECO:0007669"/>
    <property type="project" value="UniProtKB-EC"/>
</dbReference>
<dbReference type="GO" id="GO:0005524">
    <property type="term" value="F:ATP binding"/>
    <property type="evidence" value="ECO:0007669"/>
    <property type="project" value="UniProtKB-KW"/>
</dbReference>
<dbReference type="GO" id="GO:0016887">
    <property type="term" value="F:ATP hydrolysis activity"/>
    <property type="evidence" value="ECO:0007669"/>
    <property type="project" value="InterPro"/>
</dbReference>
<dbReference type="CDD" id="cd03216">
    <property type="entry name" value="ABC_Carb_Monos_I"/>
    <property type="match status" value="1"/>
</dbReference>
<dbReference type="CDD" id="cd03215">
    <property type="entry name" value="ABC_Carb_Monos_II"/>
    <property type="match status" value="1"/>
</dbReference>
<dbReference type="FunFam" id="3.40.50.300:FF:000126">
    <property type="entry name" value="Galactose/methyl galactoside import ATP-binding protein MglA"/>
    <property type="match status" value="1"/>
</dbReference>
<dbReference type="FunFam" id="3.40.50.300:FF:000127">
    <property type="entry name" value="Ribose import ATP-binding protein RbsA"/>
    <property type="match status" value="1"/>
</dbReference>
<dbReference type="Gene3D" id="3.40.50.300">
    <property type="entry name" value="P-loop containing nucleotide triphosphate hydrolases"/>
    <property type="match status" value="2"/>
</dbReference>
<dbReference type="InterPro" id="IPR003593">
    <property type="entry name" value="AAA+_ATPase"/>
</dbReference>
<dbReference type="InterPro" id="IPR050107">
    <property type="entry name" value="ABC_carbohydrate_import_ATPase"/>
</dbReference>
<dbReference type="InterPro" id="IPR003439">
    <property type="entry name" value="ABC_transporter-like_ATP-bd"/>
</dbReference>
<dbReference type="InterPro" id="IPR017871">
    <property type="entry name" value="ABC_transporter-like_CS"/>
</dbReference>
<dbReference type="InterPro" id="IPR027417">
    <property type="entry name" value="P-loop_NTPase"/>
</dbReference>
<dbReference type="NCBIfam" id="NF008442">
    <property type="entry name" value="PRK11288.1"/>
    <property type="match status" value="1"/>
</dbReference>
<dbReference type="PANTHER" id="PTHR43790:SF6">
    <property type="entry name" value="ARABINOSE IMPORT ATP-BINDING PROTEIN ARAG"/>
    <property type="match status" value="1"/>
</dbReference>
<dbReference type="PANTHER" id="PTHR43790">
    <property type="entry name" value="CARBOHYDRATE TRANSPORT ATP-BINDING PROTEIN MG119-RELATED"/>
    <property type="match status" value="1"/>
</dbReference>
<dbReference type="Pfam" id="PF00005">
    <property type="entry name" value="ABC_tran"/>
    <property type="match status" value="2"/>
</dbReference>
<dbReference type="SMART" id="SM00382">
    <property type="entry name" value="AAA"/>
    <property type="match status" value="2"/>
</dbReference>
<dbReference type="SUPFAM" id="SSF52540">
    <property type="entry name" value="P-loop containing nucleoside triphosphate hydrolases"/>
    <property type="match status" value="2"/>
</dbReference>
<dbReference type="PROSITE" id="PS00211">
    <property type="entry name" value="ABC_TRANSPORTER_1"/>
    <property type="match status" value="1"/>
</dbReference>
<dbReference type="PROSITE" id="PS50893">
    <property type="entry name" value="ABC_TRANSPORTER_2"/>
    <property type="match status" value="2"/>
</dbReference>
<dbReference type="PROSITE" id="PS51268">
    <property type="entry name" value="ARAG"/>
    <property type="match status" value="1"/>
</dbReference>
<feature type="chain" id="PRO_0000270485" description="Arabinose import ATP-binding protein AraG">
    <location>
        <begin position="1"/>
        <end position="523"/>
    </location>
</feature>
<feature type="domain" description="ABC transporter 1" evidence="1">
    <location>
        <begin position="20"/>
        <end position="255"/>
    </location>
</feature>
<feature type="domain" description="ABC transporter 2" evidence="1">
    <location>
        <begin position="268"/>
        <end position="511"/>
    </location>
</feature>
<feature type="binding site" evidence="1">
    <location>
        <begin position="52"/>
        <end position="59"/>
    </location>
    <ligand>
        <name>ATP</name>
        <dbReference type="ChEBI" id="CHEBI:30616"/>
    </ligand>
</feature>
<sequence length="523" mass="56873">MSAPHSALQAELDAAQSPYLAFRGIGKSFPGVLALDDISFTCQAGQIHALMGENGAGKSTLLKILSGNYTPTQGEIHIKGKAVNFTNTTDALDAGVAIIYQELHLVPEMTVAENIYLGQLPTKMGMVDRKLLRYESRIQLSHLGLDIDPDTPLKYLSIGQWQMVEIAKALARNAKIIAFDEPTSSLSAREIEQLFRVIRELRAEGRVILYVSHRMEEIFALSDAITVFKDGRYVRTFDDMTQVNNASLVQAMVGRNLGDIYGYQPREIGSERLTLQAVKAIGVASPISLTVHQGEIVGLFGLVGAGRSELLKGLFGDTKLTSGKLLLDGQPLTIRSPIDAISAGIMLCPEDRKADGIIPVHSVQDNINISARRKTLTAGCLINNRWEADNALLRIQSLNIKTPGPQQLIMNLSGGNQQKAILGRWLSEDMKVILLDEPTRGIDVGAKHEIYNVIYQLAKQGIAVLFASSDLPEVLGLADRIVVMREGAISGELDHEYATEEQALSLAMLRTPNIATNTASAVA</sequence>
<reference key="1">
    <citation type="journal article" date="2006" name="J. Bacteriol.">
        <title>Complete genome sequence of Yersinia pestis strains Antiqua and Nepal516: evidence of gene reduction in an emerging pathogen.</title>
        <authorList>
            <person name="Chain P.S.G."/>
            <person name="Hu P."/>
            <person name="Malfatti S.A."/>
            <person name="Radnedge L."/>
            <person name="Larimer F."/>
            <person name="Vergez L.M."/>
            <person name="Worsham P."/>
            <person name="Chu M.C."/>
            <person name="Andersen G.L."/>
        </authorList>
    </citation>
    <scope>NUCLEOTIDE SEQUENCE [LARGE SCALE GENOMIC DNA]</scope>
    <source>
        <strain>Nepal516</strain>
    </source>
</reference>
<reference key="2">
    <citation type="submission" date="2009-04" db="EMBL/GenBank/DDBJ databases">
        <title>Yersinia pestis Nepal516A whole genome shotgun sequencing project.</title>
        <authorList>
            <person name="Plunkett G. III"/>
            <person name="Anderson B.D."/>
            <person name="Baumler D.J."/>
            <person name="Burland V."/>
            <person name="Cabot E.L."/>
            <person name="Glasner J.D."/>
            <person name="Mau B."/>
            <person name="Neeno-Eckwall E."/>
            <person name="Perna N.T."/>
            <person name="Munk A.C."/>
            <person name="Tapia R."/>
            <person name="Green L.D."/>
            <person name="Rogers Y.C."/>
            <person name="Detter J.C."/>
            <person name="Bruce D.C."/>
            <person name="Brettin T.S."/>
        </authorList>
    </citation>
    <scope>NUCLEOTIDE SEQUENCE [LARGE SCALE GENOMIC DNA]</scope>
    <source>
        <strain>Nepal516</strain>
    </source>
</reference>
<evidence type="ECO:0000255" key="1">
    <source>
        <dbReference type="HAMAP-Rule" id="MF_01721"/>
    </source>
</evidence>
<keyword id="KW-0067">ATP-binding</keyword>
<keyword id="KW-0997">Cell inner membrane</keyword>
<keyword id="KW-1003">Cell membrane</keyword>
<keyword id="KW-0472">Membrane</keyword>
<keyword id="KW-0547">Nucleotide-binding</keyword>
<keyword id="KW-0677">Repeat</keyword>
<keyword id="KW-0762">Sugar transport</keyword>
<keyword id="KW-1278">Translocase</keyword>
<keyword id="KW-0813">Transport</keyword>
<protein>
    <recommendedName>
        <fullName evidence="1">Arabinose import ATP-binding protein AraG</fullName>
        <ecNumber evidence="1">7.5.2.12</ecNumber>
    </recommendedName>
</protein>
<organism>
    <name type="scientific">Yersinia pestis bv. Antiqua (strain Nepal516)</name>
    <dbReference type="NCBI Taxonomy" id="377628"/>
    <lineage>
        <taxon>Bacteria</taxon>
        <taxon>Pseudomonadati</taxon>
        <taxon>Pseudomonadota</taxon>
        <taxon>Gammaproteobacteria</taxon>
        <taxon>Enterobacterales</taxon>
        <taxon>Yersiniaceae</taxon>
        <taxon>Yersinia</taxon>
    </lineage>
</organism>
<gene>
    <name evidence="1" type="primary">araG</name>
    <name type="ordered locus">YPN_1725</name>
    <name type="ORF">YP516_1916</name>
</gene>
<proteinExistence type="inferred from homology"/>
<comment type="function">
    <text evidence="1">Part of the ABC transporter complex AraFGH involved in arabinose import. Responsible for energy coupling to the transport system.</text>
</comment>
<comment type="catalytic activity">
    <reaction evidence="1">
        <text>L-arabinose(out) + ATP + H2O = L-arabinose(in) + ADP + phosphate + H(+)</text>
        <dbReference type="Rhea" id="RHEA:30007"/>
        <dbReference type="ChEBI" id="CHEBI:15377"/>
        <dbReference type="ChEBI" id="CHEBI:15378"/>
        <dbReference type="ChEBI" id="CHEBI:17535"/>
        <dbReference type="ChEBI" id="CHEBI:30616"/>
        <dbReference type="ChEBI" id="CHEBI:43474"/>
        <dbReference type="ChEBI" id="CHEBI:456216"/>
        <dbReference type="EC" id="7.5.2.12"/>
    </reaction>
</comment>
<comment type="subunit">
    <text evidence="1">The complex is composed of two ATP-binding proteins (AraG), two transmembrane proteins (AraH) and a solute-binding protein (AraF).</text>
</comment>
<comment type="subcellular location">
    <subcellularLocation>
        <location evidence="1">Cell inner membrane</location>
        <topology evidence="1">Peripheral membrane protein</topology>
    </subcellularLocation>
</comment>
<comment type="similarity">
    <text evidence="1">Belongs to the ABC transporter superfamily. Arabinose importer (TC 3.A.1.2.2) family.</text>
</comment>
<name>ARAG_YERPN</name>
<accession>Q1CIX6</accession>
<accession>C4GT21</accession>